<dbReference type="EMBL" id="AF279106">
    <property type="protein sequence ID" value="AAQ62400.1"/>
    <property type="molecule type" value="Genomic_DNA"/>
</dbReference>
<dbReference type="SMR" id="P60104"/>
<dbReference type="GO" id="GO:0022625">
    <property type="term" value="C:cytosolic large ribosomal subunit"/>
    <property type="evidence" value="ECO:0007669"/>
    <property type="project" value="TreeGrafter"/>
</dbReference>
<dbReference type="GO" id="GO:0070180">
    <property type="term" value="F:large ribosomal subunit rRNA binding"/>
    <property type="evidence" value="ECO:0007669"/>
    <property type="project" value="UniProtKB-UniRule"/>
</dbReference>
<dbReference type="GO" id="GO:0003735">
    <property type="term" value="F:structural constituent of ribosome"/>
    <property type="evidence" value="ECO:0007669"/>
    <property type="project" value="InterPro"/>
</dbReference>
<dbReference type="GO" id="GO:0006412">
    <property type="term" value="P:translation"/>
    <property type="evidence" value="ECO:0007669"/>
    <property type="project" value="UniProtKB-UniRule"/>
</dbReference>
<dbReference type="CDD" id="cd00349">
    <property type="entry name" value="Ribosomal_L11"/>
    <property type="match status" value="1"/>
</dbReference>
<dbReference type="FunFam" id="1.10.10.250:FF:000001">
    <property type="entry name" value="50S ribosomal protein L11"/>
    <property type="match status" value="1"/>
</dbReference>
<dbReference type="FunFam" id="3.30.1550.10:FF:000001">
    <property type="entry name" value="50S ribosomal protein L11"/>
    <property type="match status" value="1"/>
</dbReference>
<dbReference type="Gene3D" id="1.10.10.250">
    <property type="entry name" value="Ribosomal protein L11, C-terminal domain"/>
    <property type="match status" value="1"/>
</dbReference>
<dbReference type="Gene3D" id="3.30.1550.10">
    <property type="entry name" value="Ribosomal protein L11/L12, N-terminal domain"/>
    <property type="match status" value="1"/>
</dbReference>
<dbReference type="HAMAP" id="MF_00736">
    <property type="entry name" value="Ribosomal_uL11"/>
    <property type="match status" value="1"/>
</dbReference>
<dbReference type="InterPro" id="IPR000911">
    <property type="entry name" value="Ribosomal_uL11"/>
</dbReference>
<dbReference type="InterPro" id="IPR006519">
    <property type="entry name" value="Ribosomal_uL11_bac-typ"/>
</dbReference>
<dbReference type="InterPro" id="IPR020783">
    <property type="entry name" value="Ribosomal_uL11_C"/>
</dbReference>
<dbReference type="InterPro" id="IPR036769">
    <property type="entry name" value="Ribosomal_uL11_C_sf"/>
</dbReference>
<dbReference type="InterPro" id="IPR020784">
    <property type="entry name" value="Ribosomal_uL11_N"/>
</dbReference>
<dbReference type="InterPro" id="IPR036796">
    <property type="entry name" value="Ribosomal_uL11_N_sf"/>
</dbReference>
<dbReference type="NCBIfam" id="TIGR01632">
    <property type="entry name" value="L11_bact"/>
    <property type="match status" value="1"/>
</dbReference>
<dbReference type="PANTHER" id="PTHR11661">
    <property type="entry name" value="60S RIBOSOMAL PROTEIN L12"/>
    <property type="match status" value="1"/>
</dbReference>
<dbReference type="PANTHER" id="PTHR11661:SF1">
    <property type="entry name" value="LARGE RIBOSOMAL SUBUNIT PROTEIN UL11M"/>
    <property type="match status" value="1"/>
</dbReference>
<dbReference type="Pfam" id="PF00298">
    <property type="entry name" value="Ribosomal_L11"/>
    <property type="match status" value="1"/>
</dbReference>
<dbReference type="Pfam" id="PF03946">
    <property type="entry name" value="Ribosomal_L11_N"/>
    <property type="match status" value="1"/>
</dbReference>
<dbReference type="SMART" id="SM00649">
    <property type="entry name" value="RL11"/>
    <property type="match status" value="1"/>
</dbReference>
<dbReference type="SUPFAM" id="SSF54747">
    <property type="entry name" value="Ribosomal L11/L12e N-terminal domain"/>
    <property type="match status" value="1"/>
</dbReference>
<dbReference type="SUPFAM" id="SSF46906">
    <property type="entry name" value="Ribosomal protein L11, C-terminal domain"/>
    <property type="match status" value="1"/>
</dbReference>
<gene>
    <name evidence="1" type="primary">rplK</name>
</gene>
<feature type="chain" id="PRO_0000104337" description="Large ribosomal subunit protein uL11">
    <location>
        <begin position="1"/>
        <end position="142"/>
    </location>
</feature>
<evidence type="ECO:0000255" key="1">
    <source>
        <dbReference type="HAMAP-Rule" id="MF_00736"/>
    </source>
</evidence>
<evidence type="ECO:0000305" key="2"/>
<organism>
    <name type="scientific">Gamma-proteobacterium EBAC31A08</name>
    <dbReference type="NCBI Taxonomy" id="133804"/>
    <lineage>
        <taxon>Bacteria</taxon>
        <taxon>Pseudomonadati</taxon>
        <taxon>Pseudomonadota</taxon>
        <taxon>Gammaproteobacteria</taxon>
        <taxon>environmental samples</taxon>
    </lineage>
</organism>
<proteinExistence type="inferred from homology"/>
<accession>P60104</accession>
<comment type="function">
    <text evidence="1">Forms part of the ribosomal stalk which helps the ribosome interact with GTP-bound translation factors.</text>
</comment>
<comment type="subunit">
    <text evidence="1">Part of the ribosomal stalk of the 50S ribosomal subunit. Interacts with L10 and the large rRNA to form the base of the stalk. L10 forms an elongated spine to which L12 dimers bind in a sequential fashion forming a multimeric L10(L12)X complex.</text>
</comment>
<comment type="PTM">
    <text evidence="1">One or more lysine residues are methylated.</text>
</comment>
<comment type="similarity">
    <text evidence="1">Belongs to the universal ribosomal protein uL11 family.</text>
</comment>
<protein>
    <recommendedName>
        <fullName evidence="1">Large ribosomal subunit protein uL11</fullName>
    </recommendedName>
    <alternativeName>
        <fullName evidence="2">50S ribosomal protein L11</fullName>
    </alternativeName>
</protein>
<keyword id="KW-0488">Methylation</keyword>
<keyword id="KW-0687">Ribonucleoprotein</keyword>
<keyword id="KW-0689">Ribosomal protein</keyword>
<keyword id="KW-0694">RNA-binding</keyword>
<keyword id="KW-0699">rRNA-binding</keyword>
<reference key="1">
    <citation type="submission" date="2003-08" db="EMBL/GenBank/DDBJ databases">
        <authorList>
            <person name="Beja O."/>
            <person name="Aravind L."/>
            <person name="Koonin E.V."/>
            <person name="Suzuki M.T."/>
            <person name="Hadd A."/>
            <person name="Nguyen L.P."/>
            <person name="Jovanovich S.B."/>
            <person name="Gates C.M."/>
            <person name="Feldman R.A."/>
            <person name="DeLong E.F."/>
        </authorList>
    </citation>
    <scope>NUCLEOTIDE SEQUENCE [GENOMIC DNA]</scope>
</reference>
<name>RL11_PRB01</name>
<sequence>MAKKVANILKLQIPAGGANPSPPVGPALGQVGVNIMDFCNAFNAETQSAEKGMPLPVVITVYEDKSFTFVVKTPPAAVLIRKILGIAKGSGEPNREKVGKLTRAQLEDIAKQKEPDLNSNDIDAAVLIIAGTARSMGVEVDL</sequence>